<evidence type="ECO:0000250" key="1"/>
<evidence type="ECO:0000255" key="2">
    <source>
        <dbReference type="PROSITE-ProRule" id="PRU00177"/>
    </source>
</evidence>
<evidence type="ECO:0000255" key="3">
    <source>
        <dbReference type="PROSITE-ProRule" id="PRU00266"/>
    </source>
</evidence>
<evidence type="ECO:0000255" key="4">
    <source>
        <dbReference type="PROSITE-ProRule" id="PRU00541"/>
    </source>
</evidence>
<evidence type="ECO:0000255" key="5">
    <source>
        <dbReference type="PROSITE-ProRule" id="PRU00542"/>
    </source>
</evidence>
<evidence type="ECO:0000255" key="6">
    <source>
        <dbReference type="PROSITE-ProRule" id="PRU00657"/>
    </source>
</evidence>
<evidence type="ECO:0000256" key="7">
    <source>
        <dbReference type="SAM" id="MobiDB-lite"/>
    </source>
</evidence>
<evidence type="ECO:0000269" key="8">
    <source>
    </source>
</evidence>
<protein>
    <recommendedName>
        <fullName>Dicer-like protein 2</fullName>
    </recommendedName>
    <domain>
        <recommendedName>
            <fullName>Endoribonuclease DCL2</fullName>
            <ecNumber>3.1.26.-</ecNumber>
        </recommendedName>
    </domain>
    <domain>
        <recommendedName>
            <fullName>ATP-dependent helicase DCL2</fullName>
            <ecNumber>3.6.4.-</ecNumber>
        </recommendedName>
    </domain>
</protein>
<sequence length="1485" mass="166095">MSSQDESASSSDTGEGGHVFGRENLNQSADYGYKTGSSASTHSTTDDAISEEPQPSGNGPRSIIARAYQLEMFQASMQQNIIVSMDTGSGKTQVAVLRIRAELERTPPEKRVWFLAPTVALCAQQYEVIRSQIKVANSIVMTGDDNVDSWSDVQTWDAVLANVRVVVCTYMILFEALSHAFVTMDSISLLVMDEAHNCTGKFPGRLIMKRFYMPRKSAGDHVPHILGLTASPVMKSDLSSMEDLESSLDSVCRGPTLQREELFANVHQPTMTVTTYKECDLRSPVQYTRNMNNLHLAFENLDIAEDPYVLHLMGQRTPKSLRELDRILTKLDTYTQNQMKALQRKSSSLFRELGQWAVDSYIYNVVEKVSNLDARSSWLGGWLDDEQRYLHRAIQGINALPVSAAIPAPEMTSIKLQVLLRILRGYEGSPVGIVFVKERATAGILSQLLAIIPDINARYKVGCMVGTSRYMSRKMNIHEVLQQGDDLLALEKFRSGAINLLVATSVLEEGIDVPVCNLVICFDMPANLKSFIQRRGRARMRESKLHLMIEEDSLVSVKDWGALEAAMKQRYENDMRELDHLAQVEEEDEMDVPPLHSRTTAAKVTVDDAKGHLEHFCRVVTRSQQYVDASPEYLVTTKTTAFVGGKPIPILGVTVLLPASLPPNLRQAHSSRDWISERNAKKDAALQAYKMLYEAGLINEHLLPIRESDFVDREVDGRPGLLEVQEQWNPWPCIVEAWETGLSSQTIHRRRLQLTDQDGMLMGELDALLPVPFPPISILKLYWIQHSEHPWTISFDPDVTMSGPGSTDPSFEIQQALDQTQILLDMAFGHRFSVSEQSKALRFIWPNRTLKLQMIGGQPFSKKAGEAHSSDYIIRSYGRDPYIYKSWVPVKPPLELVRGYWKAKPDEEEPPADAPWVVVKRLPKNCGFVKNSRIPIELPKEYQTSSPRRFDYIIPEQLCTFDTVPATLVQLGMLVPSITQAMEPYFVAQELLRRTALGSLDFKDIDLVMMVITSSSAGRLTNYERVEFLGDAVLKLGAAVTCATNNLHFPEGYLSLLKDRLVSNSRLCKAATALGLDQFIITRQYSLKQWRNMLTAPEPPTNTRKMSSKTLADVTEALIGAAYIEGGMSKALRCISLMIPNERWRSLDESRAVLYQVALNDIPLPSTLGPLEELLGYSFNKKSLLIEAITHASYNIPGSAGSSLERLEFLGDSVLDFVVVARLFSVKDPAPIEHYNMHLLRTAVVNGEFLGFLAMEWRTAATQRSVVVRTGQGTADELETVETPGLPLFGFLRHNASGDWVRDQQLAEERHAEMAPGIRDALEHGQRYPWDLLARLRISKVHSDVLEAVIGAVWVDSGSLEECEKLIERVGILRYLDRALRDGVKILHPKEELGRVAQNNKVVYKVDKAKRAARAEVYEVSGELAEGEDVEFLCSVTVGDRCVARVGGAVSKNDAMTKAALEVIRVWEEAGRSWDNVGVVLEEGV</sequence>
<reference key="1">
    <citation type="journal article" date="2005" name="Nature">
        <title>The genome sequence of the rice blast fungus Magnaporthe grisea.</title>
        <authorList>
            <person name="Dean R.A."/>
            <person name="Talbot N.J."/>
            <person name="Ebbole D.J."/>
            <person name="Farman M.L."/>
            <person name="Mitchell T.K."/>
            <person name="Orbach M.J."/>
            <person name="Thon M.R."/>
            <person name="Kulkarni R."/>
            <person name="Xu J.-R."/>
            <person name="Pan H."/>
            <person name="Read N.D."/>
            <person name="Lee Y.-H."/>
            <person name="Carbone I."/>
            <person name="Brown D."/>
            <person name="Oh Y.Y."/>
            <person name="Donofrio N."/>
            <person name="Jeong J.S."/>
            <person name="Soanes D.M."/>
            <person name="Djonovic S."/>
            <person name="Kolomiets E."/>
            <person name="Rehmeyer C."/>
            <person name="Li W."/>
            <person name="Harding M."/>
            <person name="Kim S."/>
            <person name="Lebrun M.-H."/>
            <person name="Bohnert H."/>
            <person name="Coughlan S."/>
            <person name="Butler J."/>
            <person name="Calvo S.E."/>
            <person name="Ma L.-J."/>
            <person name="Nicol R."/>
            <person name="Purcell S."/>
            <person name="Nusbaum C."/>
            <person name="Galagan J.E."/>
            <person name="Birren B.W."/>
        </authorList>
    </citation>
    <scope>NUCLEOTIDE SEQUENCE [LARGE SCALE GENOMIC DNA]</scope>
    <source>
        <strain>70-15 / ATCC MYA-4617 / FGSC 8958</strain>
    </source>
</reference>
<reference key="2">
    <citation type="journal article" date="2004" name="J. Biol. Chem.">
        <title>One of the two Dicer-like proteins in the filamentous fungi Magnaporthe oryzae genome is responsible for hairpin RNA-triggered RNA silencing and related small interfering RNA accumulation.</title>
        <authorList>
            <person name="Kadotani N."/>
            <person name="Nakayashiki H."/>
            <person name="Tosa Y."/>
            <person name="Mayama S."/>
        </authorList>
    </citation>
    <scope>FUNCTION</scope>
</reference>
<proteinExistence type="inferred from homology"/>
<name>DCL2_PYRO7</name>
<gene>
    <name type="primary">DCL2</name>
    <name type="synonym">MDL2</name>
    <name type="ORF">MGG_12357</name>
</gene>
<dbReference type="EC" id="3.1.26.-"/>
<dbReference type="EC" id="3.6.4.-"/>
<dbReference type="EMBL" id="CM001232">
    <property type="protein sequence ID" value="EHA55558.1"/>
    <property type="molecule type" value="Genomic_DNA"/>
</dbReference>
<dbReference type="RefSeq" id="XP_003715365.1">
    <property type="nucleotide sequence ID" value="XM_003715317.1"/>
</dbReference>
<dbReference type="SMR" id="A4RHU9"/>
<dbReference type="STRING" id="242507.A4RHU9"/>
<dbReference type="EnsemblFungi" id="MGG_12357T0">
    <property type="protein sequence ID" value="MGG_12357T0"/>
    <property type="gene ID" value="MGG_12357"/>
</dbReference>
<dbReference type="GeneID" id="2683150"/>
<dbReference type="KEGG" id="mgr:MGG_12357"/>
<dbReference type="VEuPathDB" id="FungiDB:MGG_12357"/>
<dbReference type="eggNOG" id="KOG0701">
    <property type="taxonomic scope" value="Eukaryota"/>
</dbReference>
<dbReference type="HOGENOM" id="CLU_000907_4_6_1"/>
<dbReference type="InParanoid" id="A4RHU9"/>
<dbReference type="OMA" id="HFCAVIP"/>
<dbReference type="OrthoDB" id="416741at2759"/>
<dbReference type="Proteomes" id="UP000009058">
    <property type="component" value="Chromosome 2"/>
</dbReference>
<dbReference type="GO" id="GO:0005737">
    <property type="term" value="C:cytoplasm"/>
    <property type="evidence" value="ECO:0007669"/>
    <property type="project" value="TreeGrafter"/>
</dbReference>
<dbReference type="GO" id="GO:0005634">
    <property type="term" value="C:nucleus"/>
    <property type="evidence" value="ECO:0007669"/>
    <property type="project" value="TreeGrafter"/>
</dbReference>
<dbReference type="GO" id="GO:0005524">
    <property type="term" value="F:ATP binding"/>
    <property type="evidence" value="ECO:0007669"/>
    <property type="project" value="UniProtKB-KW"/>
</dbReference>
<dbReference type="GO" id="GO:0004386">
    <property type="term" value="F:helicase activity"/>
    <property type="evidence" value="ECO:0007669"/>
    <property type="project" value="UniProtKB-KW"/>
</dbReference>
<dbReference type="GO" id="GO:0046872">
    <property type="term" value="F:metal ion binding"/>
    <property type="evidence" value="ECO:0007669"/>
    <property type="project" value="UniProtKB-KW"/>
</dbReference>
<dbReference type="GO" id="GO:0004525">
    <property type="term" value="F:ribonuclease III activity"/>
    <property type="evidence" value="ECO:0007669"/>
    <property type="project" value="InterPro"/>
</dbReference>
<dbReference type="GO" id="GO:0003723">
    <property type="term" value="F:RNA binding"/>
    <property type="evidence" value="ECO:0007669"/>
    <property type="project" value="UniProtKB-KW"/>
</dbReference>
<dbReference type="GO" id="GO:0051607">
    <property type="term" value="P:defense response to virus"/>
    <property type="evidence" value="ECO:0007669"/>
    <property type="project" value="UniProtKB-KW"/>
</dbReference>
<dbReference type="GO" id="GO:0050688">
    <property type="term" value="P:regulation of defense response to virus"/>
    <property type="evidence" value="ECO:0007669"/>
    <property type="project" value="UniProtKB-KW"/>
</dbReference>
<dbReference type="GO" id="GO:0030422">
    <property type="term" value="P:siRNA processing"/>
    <property type="evidence" value="ECO:0007669"/>
    <property type="project" value="TreeGrafter"/>
</dbReference>
<dbReference type="CDD" id="cd18034">
    <property type="entry name" value="DEXHc_dicer"/>
    <property type="match status" value="1"/>
</dbReference>
<dbReference type="CDD" id="cd00593">
    <property type="entry name" value="RIBOc"/>
    <property type="match status" value="2"/>
</dbReference>
<dbReference type="Gene3D" id="3.30.160.380">
    <property type="entry name" value="Dicer dimerisation domain"/>
    <property type="match status" value="1"/>
</dbReference>
<dbReference type="Gene3D" id="3.40.50.300">
    <property type="entry name" value="P-loop containing nucleotide triphosphate hydrolases"/>
    <property type="match status" value="2"/>
</dbReference>
<dbReference type="Gene3D" id="1.10.1520.10">
    <property type="entry name" value="Ribonuclease III domain"/>
    <property type="match status" value="2"/>
</dbReference>
<dbReference type="InterPro" id="IPR011545">
    <property type="entry name" value="DEAD/DEAH_box_helicase_dom"/>
</dbReference>
<dbReference type="InterPro" id="IPR038248">
    <property type="entry name" value="Dicer_dimer_sf"/>
</dbReference>
<dbReference type="InterPro" id="IPR005034">
    <property type="entry name" value="Dicer_dimerisation_dom"/>
</dbReference>
<dbReference type="InterPro" id="IPR014720">
    <property type="entry name" value="dsRBD_dom"/>
</dbReference>
<dbReference type="InterPro" id="IPR014001">
    <property type="entry name" value="Helicase_ATP-bd"/>
</dbReference>
<dbReference type="InterPro" id="IPR001650">
    <property type="entry name" value="Helicase_C-like"/>
</dbReference>
<dbReference type="InterPro" id="IPR027417">
    <property type="entry name" value="P-loop_NTPase"/>
</dbReference>
<dbReference type="InterPro" id="IPR000999">
    <property type="entry name" value="RNase_III_dom"/>
</dbReference>
<dbReference type="InterPro" id="IPR036389">
    <property type="entry name" value="RNase_III_sf"/>
</dbReference>
<dbReference type="PANTHER" id="PTHR14950">
    <property type="entry name" value="DICER-RELATED"/>
    <property type="match status" value="1"/>
</dbReference>
<dbReference type="PANTHER" id="PTHR14950:SF37">
    <property type="entry name" value="ENDORIBONUCLEASE DICER"/>
    <property type="match status" value="1"/>
</dbReference>
<dbReference type="Pfam" id="PF00270">
    <property type="entry name" value="DEAD"/>
    <property type="match status" value="1"/>
</dbReference>
<dbReference type="Pfam" id="PF03368">
    <property type="entry name" value="Dicer_dimer"/>
    <property type="match status" value="1"/>
</dbReference>
<dbReference type="Pfam" id="PF00271">
    <property type="entry name" value="Helicase_C"/>
    <property type="match status" value="1"/>
</dbReference>
<dbReference type="Pfam" id="PF00636">
    <property type="entry name" value="Ribonuclease_3"/>
    <property type="match status" value="2"/>
</dbReference>
<dbReference type="SMART" id="SM00487">
    <property type="entry name" value="DEXDc"/>
    <property type="match status" value="1"/>
</dbReference>
<dbReference type="SMART" id="SM00490">
    <property type="entry name" value="HELICc"/>
    <property type="match status" value="1"/>
</dbReference>
<dbReference type="SMART" id="SM00535">
    <property type="entry name" value="RIBOc"/>
    <property type="match status" value="2"/>
</dbReference>
<dbReference type="SUPFAM" id="SSF54768">
    <property type="entry name" value="dsRNA-binding domain-like"/>
    <property type="match status" value="1"/>
</dbReference>
<dbReference type="SUPFAM" id="SSF52540">
    <property type="entry name" value="P-loop containing nucleoside triphosphate hydrolases"/>
    <property type="match status" value="1"/>
</dbReference>
<dbReference type="SUPFAM" id="SSF69065">
    <property type="entry name" value="RNase III domain-like"/>
    <property type="match status" value="2"/>
</dbReference>
<dbReference type="PROSITE" id="PS00690">
    <property type="entry name" value="DEAH_ATP_HELICASE"/>
    <property type="match status" value="1"/>
</dbReference>
<dbReference type="PROSITE" id="PS51327">
    <property type="entry name" value="DICER_DSRBF"/>
    <property type="match status" value="1"/>
</dbReference>
<dbReference type="PROSITE" id="PS50137">
    <property type="entry name" value="DS_RBD"/>
    <property type="match status" value="1"/>
</dbReference>
<dbReference type="PROSITE" id="PS51192">
    <property type="entry name" value="HELICASE_ATP_BIND_1"/>
    <property type="match status" value="1"/>
</dbReference>
<dbReference type="PROSITE" id="PS51194">
    <property type="entry name" value="HELICASE_CTER"/>
    <property type="match status" value="1"/>
</dbReference>
<dbReference type="PROSITE" id="PS00517">
    <property type="entry name" value="RNASE_3_1"/>
    <property type="match status" value="1"/>
</dbReference>
<dbReference type="PROSITE" id="PS50142">
    <property type="entry name" value="RNASE_3_2"/>
    <property type="match status" value="2"/>
</dbReference>
<feature type="chain" id="PRO_0000306794" description="Dicer-like protein 2">
    <location>
        <begin position="1"/>
        <end position="1485"/>
    </location>
</feature>
<feature type="domain" description="Helicase ATP-binding" evidence="4">
    <location>
        <begin position="72"/>
        <end position="250"/>
    </location>
</feature>
<feature type="domain" description="Helicase C-terminal" evidence="5">
    <location>
        <begin position="415"/>
        <end position="579"/>
    </location>
</feature>
<feature type="domain" description="Dicer dsRNA-binding fold" evidence="6">
    <location>
        <begin position="609"/>
        <end position="712"/>
    </location>
</feature>
<feature type="domain" description="RNase III 1" evidence="2">
    <location>
        <begin position="988"/>
        <end position="1127"/>
    </location>
</feature>
<feature type="domain" description="RNase III 2" evidence="2">
    <location>
        <begin position="1168"/>
        <end position="1358"/>
    </location>
</feature>
<feature type="domain" description="DRBM" evidence="3">
    <location>
        <begin position="1388"/>
        <end position="1469"/>
    </location>
</feature>
<feature type="region of interest" description="Disordered" evidence="7">
    <location>
        <begin position="1"/>
        <end position="61"/>
    </location>
</feature>
<feature type="short sequence motif" description="DEAH box">
    <location>
        <begin position="193"/>
        <end position="196"/>
    </location>
</feature>
<feature type="compositionally biased region" description="Low complexity" evidence="7">
    <location>
        <begin position="1"/>
        <end position="11"/>
    </location>
</feature>
<feature type="binding site" evidence="4">
    <location>
        <begin position="85"/>
        <end position="92"/>
    </location>
    <ligand>
        <name>ATP</name>
        <dbReference type="ChEBI" id="CHEBI:30616"/>
    </ligand>
</feature>
<feature type="binding site" evidence="1">
    <location>
        <position position="1208"/>
    </location>
    <ligand>
        <name>Mg(2+)</name>
        <dbReference type="ChEBI" id="CHEBI:18420"/>
    </ligand>
</feature>
<feature type="binding site" evidence="1">
    <location>
        <position position="1344"/>
    </location>
    <ligand>
        <name>Mg(2+)</name>
        <dbReference type="ChEBI" id="CHEBI:18420"/>
    </ligand>
</feature>
<feature type="binding site" evidence="1">
    <location>
        <position position="1347"/>
    </location>
    <ligand>
        <name>Mg(2+)</name>
        <dbReference type="ChEBI" id="CHEBI:18420"/>
    </ligand>
</feature>
<feature type="site" description="Important for activity" evidence="1">
    <location>
        <position position="1340"/>
    </location>
</feature>
<keyword id="KW-0051">Antiviral defense</keyword>
<keyword id="KW-0930">Antiviral protein</keyword>
<keyword id="KW-0067">ATP-binding</keyword>
<keyword id="KW-0347">Helicase</keyword>
<keyword id="KW-0378">Hydrolase</keyword>
<keyword id="KW-0460">Magnesium</keyword>
<keyword id="KW-0464">Manganese</keyword>
<keyword id="KW-0479">Metal-binding</keyword>
<keyword id="KW-0547">Nucleotide-binding</keyword>
<keyword id="KW-1185">Reference proteome</keyword>
<keyword id="KW-0677">Repeat</keyword>
<keyword id="KW-0694">RNA-binding</keyword>
<comment type="function">
    <text evidence="8">Dicer-like endonuclease involved in cleaving double-stranded RNA in the RNA interference (RNAi) pathway. Produces 21 to 25 bp dsRNAs (siRNAs) which target the selective destruction of homologous RNAs leading to sequence-specific suppression of gene expression, called post-transcriptional gene silencing (PTGS). Part of a broad host defense response against viral infection and transposons.</text>
</comment>
<comment type="cofactor">
    <cofactor evidence="1">
        <name>Mg(2+)</name>
        <dbReference type="ChEBI" id="CHEBI:18420"/>
    </cofactor>
    <cofactor evidence="1">
        <name>Mn(2+)</name>
        <dbReference type="ChEBI" id="CHEBI:29035"/>
    </cofactor>
</comment>
<comment type="similarity">
    <text evidence="6">Belongs to the helicase family. Dicer subfamily.</text>
</comment>
<organism>
    <name type="scientific">Pyricularia oryzae (strain 70-15 / ATCC MYA-4617 / FGSC 8958)</name>
    <name type="common">Rice blast fungus</name>
    <name type="synonym">Magnaporthe oryzae</name>
    <dbReference type="NCBI Taxonomy" id="242507"/>
    <lineage>
        <taxon>Eukaryota</taxon>
        <taxon>Fungi</taxon>
        <taxon>Dikarya</taxon>
        <taxon>Ascomycota</taxon>
        <taxon>Pezizomycotina</taxon>
        <taxon>Sordariomycetes</taxon>
        <taxon>Sordariomycetidae</taxon>
        <taxon>Magnaporthales</taxon>
        <taxon>Pyriculariaceae</taxon>
        <taxon>Pyricularia</taxon>
    </lineage>
</organism>
<accession>A4RHU9</accession>
<accession>G4MTK0</accession>